<keyword id="KW-0002">3D-structure</keyword>
<keyword id="KW-0997">Cell inner membrane</keyword>
<keyword id="KW-1003">Cell membrane</keyword>
<keyword id="KW-0378">Hydrolase</keyword>
<keyword id="KW-0441">Lipid A biosynthesis</keyword>
<keyword id="KW-0444">Lipid biosynthesis</keyword>
<keyword id="KW-0443">Lipid metabolism</keyword>
<keyword id="KW-0464">Manganese</keyword>
<keyword id="KW-0472">Membrane</keyword>
<keyword id="KW-0479">Metal-binding</keyword>
<proteinExistence type="evidence at protein level"/>
<feature type="chain" id="PRO_1000025060" description="UDP-2,3-diacylglucosamine hydrolase">
    <location>
        <begin position="1"/>
        <end position="240"/>
    </location>
</feature>
<feature type="binding site" evidence="1">
    <location>
        <position position="8"/>
    </location>
    <ligand>
        <name>Mn(2+)</name>
        <dbReference type="ChEBI" id="CHEBI:29035"/>
        <label>1</label>
    </ligand>
</feature>
<feature type="binding site" evidence="1">
    <location>
        <position position="10"/>
    </location>
    <ligand>
        <name>Mn(2+)</name>
        <dbReference type="ChEBI" id="CHEBI:29035"/>
        <label>1</label>
    </ligand>
</feature>
<feature type="binding site" evidence="1">
    <location>
        <position position="41"/>
    </location>
    <ligand>
        <name>Mn(2+)</name>
        <dbReference type="ChEBI" id="CHEBI:29035"/>
        <label>1</label>
    </ligand>
</feature>
<feature type="binding site" evidence="1">
    <location>
        <position position="41"/>
    </location>
    <ligand>
        <name>Mn(2+)</name>
        <dbReference type="ChEBI" id="CHEBI:29035"/>
        <label>2</label>
    </ligand>
</feature>
<feature type="binding site" evidence="1">
    <location>
        <begin position="79"/>
        <end position="80"/>
    </location>
    <ligand>
        <name>substrate</name>
    </ligand>
</feature>
<feature type="binding site" evidence="1">
    <location>
        <position position="79"/>
    </location>
    <ligand>
        <name>Mn(2+)</name>
        <dbReference type="ChEBI" id="CHEBI:29035"/>
        <label>2</label>
    </ligand>
</feature>
<feature type="binding site" evidence="1">
    <location>
        <position position="114"/>
    </location>
    <ligand>
        <name>Mn(2+)</name>
        <dbReference type="ChEBI" id="CHEBI:29035"/>
        <label>2</label>
    </ligand>
</feature>
<feature type="binding site" evidence="1">
    <location>
        <position position="122"/>
    </location>
    <ligand>
        <name>substrate</name>
    </ligand>
</feature>
<feature type="binding site" evidence="1">
    <location>
        <position position="160"/>
    </location>
    <ligand>
        <name>substrate</name>
    </ligand>
</feature>
<feature type="binding site" evidence="1">
    <location>
        <position position="164"/>
    </location>
    <ligand>
        <name>substrate</name>
    </ligand>
</feature>
<feature type="binding site" evidence="1">
    <location>
        <position position="167"/>
    </location>
    <ligand>
        <name>substrate</name>
    </ligand>
</feature>
<feature type="binding site" evidence="1">
    <location>
        <position position="195"/>
    </location>
    <ligand>
        <name>Mn(2+)</name>
        <dbReference type="ChEBI" id="CHEBI:29035"/>
        <label>2</label>
    </ligand>
</feature>
<feature type="binding site" evidence="1">
    <location>
        <position position="195"/>
    </location>
    <ligand>
        <name>substrate</name>
    </ligand>
</feature>
<feature type="binding site" evidence="1">
    <location>
        <position position="197"/>
    </location>
    <ligand>
        <name>Mn(2+)</name>
        <dbReference type="ChEBI" id="CHEBI:29035"/>
        <label>1</label>
    </ligand>
</feature>
<feature type="strand" evidence="4">
    <location>
        <begin position="3"/>
        <end position="6"/>
    </location>
</feature>
<feature type="helix" evidence="4">
    <location>
        <begin position="16"/>
        <end position="27"/>
    </location>
</feature>
<feature type="helix" evidence="4">
    <location>
        <begin position="29"/>
        <end position="32"/>
    </location>
</feature>
<feature type="strand" evidence="4">
    <location>
        <begin position="34"/>
        <end position="38"/>
    </location>
</feature>
<feature type="strand" evidence="4">
    <location>
        <begin position="42"/>
        <end position="44"/>
    </location>
</feature>
<feature type="helix" evidence="4">
    <location>
        <begin position="54"/>
        <end position="68"/>
    </location>
</feature>
<feature type="strand" evidence="4">
    <location>
        <begin position="73"/>
        <end position="75"/>
    </location>
</feature>
<feature type="strand" evidence="4">
    <location>
        <begin position="79"/>
        <end position="81"/>
    </location>
</feature>
<feature type="helix" evidence="4">
    <location>
        <begin position="86"/>
        <end position="92"/>
    </location>
</feature>
<feature type="strand" evidence="4">
    <location>
        <begin position="99"/>
        <end position="105"/>
    </location>
</feature>
<feature type="strand" evidence="4">
    <location>
        <begin position="108"/>
        <end position="113"/>
    </location>
</feature>
<feature type="helix" evidence="4">
    <location>
        <begin position="116"/>
        <end position="118"/>
    </location>
</feature>
<feature type="helix" evidence="4">
    <location>
        <begin position="123"/>
        <end position="132"/>
    </location>
</feature>
<feature type="helix" evidence="4">
    <location>
        <begin position="135"/>
        <end position="143"/>
    </location>
</feature>
<feature type="helix" evidence="4">
    <location>
        <begin position="146"/>
        <end position="156"/>
    </location>
</feature>
<feature type="helix" evidence="3">
    <location>
        <begin position="164"/>
        <end position="166"/>
    </location>
</feature>
<feature type="helix" evidence="2">
    <location>
        <begin position="169"/>
        <end position="172"/>
    </location>
</feature>
<feature type="helix" evidence="4">
    <location>
        <begin position="176"/>
        <end position="185"/>
    </location>
</feature>
<feature type="strand" evidence="4">
    <location>
        <begin position="189"/>
        <end position="193"/>
    </location>
</feature>
<feature type="strand" evidence="4">
    <location>
        <begin position="200"/>
        <end position="206"/>
    </location>
</feature>
<feature type="strand" evidence="4">
    <location>
        <begin position="209"/>
        <end position="215"/>
    </location>
</feature>
<feature type="strand" evidence="4">
    <location>
        <begin position="220"/>
        <end position="228"/>
    </location>
</feature>
<feature type="strand" evidence="4">
    <location>
        <begin position="233"/>
        <end position="238"/>
    </location>
</feature>
<name>LPXH_KLEP7</name>
<protein>
    <recommendedName>
        <fullName evidence="1">UDP-2,3-diacylglucosamine hydrolase</fullName>
        <ecNumber evidence="1">3.6.1.54</ecNumber>
    </recommendedName>
    <alternativeName>
        <fullName evidence="1">UDP-2,3-diacylglucosamine diphosphatase</fullName>
    </alternativeName>
</protein>
<dbReference type="EC" id="3.6.1.54" evidence="1"/>
<dbReference type="EMBL" id="CP000647">
    <property type="protein sequence ID" value="ABR75931.1"/>
    <property type="molecule type" value="Genomic_DNA"/>
</dbReference>
<dbReference type="RefSeq" id="WP_004191610.1">
    <property type="nucleotide sequence ID" value="NC_009648.1"/>
</dbReference>
<dbReference type="PDB" id="6PH9">
    <property type="method" value="X-ray"/>
    <property type="resolution" value="1.92 A"/>
    <property type="chains" value="A=2-240"/>
</dbReference>
<dbReference type="PDB" id="6PIB">
    <property type="method" value="X-ray"/>
    <property type="resolution" value="2.26 A"/>
    <property type="chains" value="A=2-240"/>
</dbReference>
<dbReference type="PDB" id="6PJ3">
    <property type="method" value="X-ray"/>
    <property type="resolution" value="2.25 A"/>
    <property type="chains" value="A=1-240"/>
</dbReference>
<dbReference type="PDB" id="6WII">
    <property type="method" value="X-ray"/>
    <property type="resolution" value="1.85 A"/>
    <property type="chains" value="A=1-240"/>
</dbReference>
<dbReference type="PDB" id="7SS6">
    <property type="method" value="X-ray"/>
    <property type="resolution" value="1.74 A"/>
    <property type="chains" value="A=1-240"/>
</dbReference>
<dbReference type="PDB" id="7SS7">
    <property type="method" value="X-ray"/>
    <property type="resolution" value="1.73 A"/>
    <property type="chains" value="A=1-240"/>
</dbReference>
<dbReference type="PDB" id="8QK2">
    <property type="method" value="X-ray"/>
    <property type="resolution" value="1.95 A"/>
    <property type="chains" value="A=1-240"/>
</dbReference>
<dbReference type="PDB" id="8QK5">
    <property type="method" value="X-ray"/>
    <property type="resolution" value="1.95 A"/>
    <property type="chains" value="A=1-240"/>
</dbReference>
<dbReference type="PDB" id="8QKA">
    <property type="method" value="X-ray"/>
    <property type="resolution" value="2.00 A"/>
    <property type="chains" value="A=1-240"/>
</dbReference>
<dbReference type="PDB" id="9ENG">
    <property type="method" value="X-ray"/>
    <property type="resolution" value="2.20 A"/>
    <property type="chains" value="A=1-240"/>
</dbReference>
<dbReference type="PDBsum" id="6PH9"/>
<dbReference type="PDBsum" id="6PIB"/>
<dbReference type="PDBsum" id="6PJ3"/>
<dbReference type="PDBsum" id="6WII"/>
<dbReference type="PDBsum" id="7SS6"/>
<dbReference type="PDBsum" id="7SS7"/>
<dbReference type="PDBsum" id="8QK2"/>
<dbReference type="PDBsum" id="8QK5"/>
<dbReference type="PDBsum" id="8QKA"/>
<dbReference type="PDBsum" id="9ENG"/>
<dbReference type="SMR" id="A6T5R0"/>
<dbReference type="STRING" id="272620.KPN_00480"/>
<dbReference type="PaxDb" id="272620-KPN_00480"/>
<dbReference type="DNASU" id="5341259"/>
<dbReference type="EnsemblBacteria" id="ABR75931">
    <property type="protein sequence ID" value="ABR75931"/>
    <property type="gene ID" value="KPN_00480"/>
</dbReference>
<dbReference type="KEGG" id="kpn:KPN_00480"/>
<dbReference type="HOGENOM" id="CLU_074586_0_0_6"/>
<dbReference type="UniPathway" id="UPA00359">
    <property type="reaction ID" value="UER00480"/>
</dbReference>
<dbReference type="Proteomes" id="UP000000265">
    <property type="component" value="Chromosome"/>
</dbReference>
<dbReference type="GO" id="GO:0005737">
    <property type="term" value="C:cytoplasm"/>
    <property type="evidence" value="ECO:0007669"/>
    <property type="project" value="InterPro"/>
</dbReference>
<dbReference type="GO" id="GO:0019897">
    <property type="term" value="C:extrinsic component of plasma membrane"/>
    <property type="evidence" value="ECO:0007669"/>
    <property type="project" value="UniProtKB-UniRule"/>
</dbReference>
<dbReference type="GO" id="GO:0030145">
    <property type="term" value="F:manganese ion binding"/>
    <property type="evidence" value="ECO:0007669"/>
    <property type="project" value="UniProtKB-UniRule"/>
</dbReference>
<dbReference type="GO" id="GO:0008758">
    <property type="term" value="F:UDP-2,3-diacylglucosamine hydrolase activity"/>
    <property type="evidence" value="ECO:0007669"/>
    <property type="project" value="UniProtKB-UniRule"/>
</dbReference>
<dbReference type="GO" id="GO:0009245">
    <property type="term" value="P:lipid A biosynthetic process"/>
    <property type="evidence" value="ECO:0007669"/>
    <property type="project" value="UniProtKB-UniRule"/>
</dbReference>
<dbReference type="CDD" id="cd07398">
    <property type="entry name" value="MPP_YbbF-LpxH"/>
    <property type="match status" value="1"/>
</dbReference>
<dbReference type="FunFam" id="3.60.21.10:FF:000012">
    <property type="entry name" value="UDP-2,3-diacylglucosamine hydrolase"/>
    <property type="match status" value="1"/>
</dbReference>
<dbReference type="Gene3D" id="3.60.21.10">
    <property type="match status" value="1"/>
</dbReference>
<dbReference type="HAMAP" id="MF_00575">
    <property type="entry name" value="LpxH"/>
    <property type="match status" value="1"/>
</dbReference>
<dbReference type="InterPro" id="IPR004843">
    <property type="entry name" value="Calcineurin-like_PHP_ApaH"/>
</dbReference>
<dbReference type="InterPro" id="IPR043461">
    <property type="entry name" value="LpxH-like"/>
</dbReference>
<dbReference type="InterPro" id="IPR029052">
    <property type="entry name" value="Metallo-depent_PP-like"/>
</dbReference>
<dbReference type="InterPro" id="IPR010138">
    <property type="entry name" value="UDP-diacylglucosamine_Hdrlase"/>
</dbReference>
<dbReference type="NCBIfam" id="TIGR01854">
    <property type="entry name" value="lipid_A_lpxH"/>
    <property type="match status" value="1"/>
</dbReference>
<dbReference type="NCBIfam" id="NF003743">
    <property type="entry name" value="PRK05340.1"/>
    <property type="match status" value="1"/>
</dbReference>
<dbReference type="PANTHER" id="PTHR34990:SF1">
    <property type="entry name" value="UDP-2,3-DIACYLGLUCOSAMINE HYDROLASE"/>
    <property type="match status" value="1"/>
</dbReference>
<dbReference type="PANTHER" id="PTHR34990">
    <property type="entry name" value="UDP-2,3-DIACYLGLUCOSAMINE HYDROLASE-RELATED"/>
    <property type="match status" value="1"/>
</dbReference>
<dbReference type="Pfam" id="PF00149">
    <property type="entry name" value="Metallophos"/>
    <property type="match status" value="1"/>
</dbReference>
<dbReference type="SUPFAM" id="SSF56300">
    <property type="entry name" value="Metallo-dependent phosphatases"/>
    <property type="match status" value="1"/>
</dbReference>
<accession>A6T5R0</accession>
<evidence type="ECO:0000255" key="1">
    <source>
        <dbReference type="HAMAP-Rule" id="MF_00575"/>
    </source>
</evidence>
<evidence type="ECO:0007829" key="2">
    <source>
        <dbReference type="PDB" id="6PH9"/>
    </source>
</evidence>
<evidence type="ECO:0007829" key="3">
    <source>
        <dbReference type="PDB" id="6PIB"/>
    </source>
</evidence>
<evidence type="ECO:0007829" key="4">
    <source>
        <dbReference type="PDB" id="7SS7"/>
    </source>
</evidence>
<sequence>MATLFIADLHLQTEEPAITAGFLRFLQGEARQADALYILGDLFEAWIGDDDPNPLHQQIASAIKAVVDAGVPCYFIHGNRDFLVGQRFARQSGMILLAEEERLDLYGREVLIMHGDTLCTDDQGYLAFRAKVHTPWIQRLFLALPLFIRHRIAARMRADSKAANSSKSMEIMDVNPQAVVDAMERHHVQWLIHGHTHRPAVHELQANGQPAWRVVLGAWHSEGSMVKVTPDDVELIHFPF</sequence>
<gene>
    <name evidence="1" type="primary">lpxH</name>
    <name type="ordered locus">KPN78578_04700</name>
    <name type="ORF">KPN_00480</name>
</gene>
<reference key="1">
    <citation type="submission" date="2006-09" db="EMBL/GenBank/DDBJ databases">
        <authorList>
            <consortium name="The Klebsiella pneumonia Genome Sequencing Project"/>
            <person name="McClelland M."/>
            <person name="Sanderson E.K."/>
            <person name="Spieth J."/>
            <person name="Clifton W.S."/>
            <person name="Latreille P."/>
            <person name="Sabo A."/>
            <person name="Pepin K."/>
            <person name="Bhonagiri V."/>
            <person name="Porwollik S."/>
            <person name="Ali J."/>
            <person name="Wilson R.K."/>
        </authorList>
    </citation>
    <scope>NUCLEOTIDE SEQUENCE [LARGE SCALE GENOMIC DNA]</scope>
    <source>
        <strain>ATCC 700721 / MGH 78578</strain>
    </source>
</reference>
<comment type="function">
    <text evidence="1">Hydrolyzes the pyrophosphate bond of UDP-2,3-diacylglucosamine to yield 2,3-diacylglucosamine 1-phosphate (lipid X) and UMP by catalyzing the attack of water at the alpha-P atom. Involved in the biosynthesis of lipid A, a phosphorylated glycolipid that anchors the lipopolysaccharide to the outer membrane of the cell.</text>
</comment>
<comment type="catalytic activity">
    <reaction evidence="1">
        <text>UDP-2-N,3-O-bis[(3R)-3-hydroxytetradecanoyl]-alpha-D-glucosamine + H2O = 2-N,3-O-bis[(3R)-3-hydroxytetradecanoyl]-alpha-D-glucosaminyl 1-phosphate + UMP + 2 H(+)</text>
        <dbReference type="Rhea" id="RHEA:25213"/>
        <dbReference type="ChEBI" id="CHEBI:15377"/>
        <dbReference type="ChEBI" id="CHEBI:15378"/>
        <dbReference type="ChEBI" id="CHEBI:57865"/>
        <dbReference type="ChEBI" id="CHEBI:57957"/>
        <dbReference type="ChEBI" id="CHEBI:78847"/>
        <dbReference type="EC" id="3.6.1.54"/>
    </reaction>
</comment>
<comment type="cofactor">
    <cofactor evidence="1">
        <name>Mn(2+)</name>
        <dbReference type="ChEBI" id="CHEBI:29035"/>
    </cofactor>
    <text evidence="1">Binds 2 Mn(2+) ions per subunit in a binuclear metal center.</text>
</comment>
<comment type="pathway">
    <text evidence="1">Glycolipid biosynthesis; lipid IV(A) biosynthesis; lipid IV(A) from (3R)-3-hydroxytetradecanoyl-[acyl-carrier-protein] and UDP-N-acetyl-alpha-D-glucosamine: step 4/6.</text>
</comment>
<comment type="subcellular location">
    <subcellularLocation>
        <location evidence="1">Cell inner membrane</location>
        <topology evidence="1">Peripheral membrane protein</topology>
        <orientation evidence="1">Cytoplasmic side</orientation>
    </subcellularLocation>
</comment>
<comment type="similarity">
    <text evidence="1">Belongs to the LpxH family.</text>
</comment>
<organism>
    <name type="scientific">Klebsiella pneumoniae subsp. pneumoniae (strain ATCC 700721 / MGH 78578)</name>
    <dbReference type="NCBI Taxonomy" id="272620"/>
    <lineage>
        <taxon>Bacteria</taxon>
        <taxon>Pseudomonadati</taxon>
        <taxon>Pseudomonadota</taxon>
        <taxon>Gammaproteobacteria</taxon>
        <taxon>Enterobacterales</taxon>
        <taxon>Enterobacteriaceae</taxon>
        <taxon>Klebsiella/Raoultella group</taxon>
        <taxon>Klebsiella</taxon>
        <taxon>Klebsiella pneumoniae complex</taxon>
    </lineage>
</organism>